<accession>Q8D1I3</accession>
<accession>Q0WAN0</accession>
<accession>Q8ZAL9</accession>
<keyword id="KW-0474">Menaquinone biosynthesis</keyword>
<keyword id="KW-0489">Methyltransferase</keyword>
<keyword id="KW-1185">Reference proteome</keyword>
<keyword id="KW-0949">S-adenosyl-L-methionine</keyword>
<keyword id="KW-0808">Transferase</keyword>
<keyword id="KW-0831">Ubiquinone biosynthesis</keyword>
<dbReference type="EC" id="2.1.1.163" evidence="1"/>
<dbReference type="EC" id="2.1.1.201" evidence="1"/>
<dbReference type="EMBL" id="AL590842">
    <property type="protein sequence ID" value="CAL22367.1"/>
    <property type="molecule type" value="Genomic_DNA"/>
</dbReference>
<dbReference type="EMBL" id="AE009952">
    <property type="protein sequence ID" value="AAM84038.1"/>
    <property type="molecule type" value="Genomic_DNA"/>
</dbReference>
<dbReference type="EMBL" id="AE017042">
    <property type="protein sequence ID" value="AAS63436.1"/>
    <property type="molecule type" value="Genomic_DNA"/>
</dbReference>
<dbReference type="PIR" id="AD0460">
    <property type="entry name" value="AD0460"/>
</dbReference>
<dbReference type="RefSeq" id="WP_002224024.1">
    <property type="nucleotide sequence ID" value="NZ_WUCM01000048.1"/>
</dbReference>
<dbReference type="RefSeq" id="YP_002348658.1">
    <property type="nucleotide sequence ID" value="NC_003143.1"/>
</dbReference>
<dbReference type="SMR" id="Q8D1I3"/>
<dbReference type="STRING" id="214092.YPO3781"/>
<dbReference type="PaxDb" id="214092-YPO3781"/>
<dbReference type="DNASU" id="1145396"/>
<dbReference type="EnsemblBacteria" id="AAS63436">
    <property type="protein sequence ID" value="AAS63436"/>
    <property type="gene ID" value="YP_3268"/>
</dbReference>
<dbReference type="GeneID" id="49787763"/>
<dbReference type="KEGG" id="ype:YPO3781"/>
<dbReference type="KEGG" id="ypj:CH55_3235"/>
<dbReference type="KEGG" id="ypk:y0449"/>
<dbReference type="KEGG" id="ypm:YP_3268"/>
<dbReference type="PATRIC" id="fig|214092.21.peg.4303"/>
<dbReference type="eggNOG" id="COG2226">
    <property type="taxonomic scope" value="Bacteria"/>
</dbReference>
<dbReference type="HOGENOM" id="CLU_037990_0_0_6"/>
<dbReference type="OMA" id="MNDVMSM"/>
<dbReference type="UniPathway" id="UPA00079">
    <property type="reaction ID" value="UER00169"/>
</dbReference>
<dbReference type="UniPathway" id="UPA00232"/>
<dbReference type="Proteomes" id="UP000000815">
    <property type="component" value="Chromosome"/>
</dbReference>
<dbReference type="Proteomes" id="UP000001019">
    <property type="component" value="Chromosome"/>
</dbReference>
<dbReference type="Proteomes" id="UP000002490">
    <property type="component" value="Chromosome"/>
</dbReference>
<dbReference type="GO" id="GO:0008425">
    <property type="term" value="F:2-methoxy-6-polyprenyl-1,4-benzoquinol methyltransferase activity"/>
    <property type="evidence" value="ECO:0000318"/>
    <property type="project" value="GO_Central"/>
</dbReference>
<dbReference type="GO" id="GO:0043770">
    <property type="term" value="F:demethylmenaquinone methyltransferase activity"/>
    <property type="evidence" value="ECO:0007669"/>
    <property type="project" value="UniProtKB-UniRule"/>
</dbReference>
<dbReference type="GO" id="GO:0009060">
    <property type="term" value="P:aerobic respiration"/>
    <property type="evidence" value="ECO:0007669"/>
    <property type="project" value="UniProtKB-UniRule"/>
</dbReference>
<dbReference type="GO" id="GO:0009234">
    <property type="term" value="P:menaquinone biosynthetic process"/>
    <property type="evidence" value="ECO:0007669"/>
    <property type="project" value="UniProtKB-UniRule"/>
</dbReference>
<dbReference type="GO" id="GO:0032259">
    <property type="term" value="P:methylation"/>
    <property type="evidence" value="ECO:0007669"/>
    <property type="project" value="UniProtKB-KW"/>
</dbReference>
<dbReference type="GO" id="GO:0006744">
    <property type="term" value="P:ubiquinone biosynthetic process"/>
    <property type="evidence" value="ECO:0000318"/>
    <property type="project" value="GO_Central"/>
</dbReference>
<dbReference type="CDD" id="cd02440">
    <property type="entry name" value="AdoMet_MTases"/>
    <property type="match status" value="1"/>
</dbReference>
<dbReference type="FunFam" id="3.40.50.150:FF:000014">
    <property type="entry name" value="Ubiquinone/menaquinone biosynthesis C-methyltransferase UbiE"/>
    <property type="match status" value="1"/>
</dbReference>
<dbReference type="Gene3D" id="3.40.50.150">
    <property type="entry name" value="Vaccinia Virus protein VP39"/>
    <property type="match status" value="1"/>
</dbReference>
<dbReference type="HAMAP" id="MF_01813">
    <property type="entry name" value="MenG_UbiE_methyltr"/>
    <property type="match status" value="1"/>
</dbReference>
<dbReference type="InterPro" id="IPR029063">
    <property type="entry name" value="SAM-dependent_MTases_sf"/>
</dbReference>
<dbReference type="InterPro" id="IPR004033">
    <property type="entry name" value="UbiE/COQ5_MeTrFase"/>
</dbReference>
<dbReference type="InterPro" id="IPR023576">
    <property type="entry name" value="UbiE/COQ5_MeTrFase_CS"/>
</dbReference>
<dbReference type="NCBIfam" id="TIGR01934">
    <property type="entry name" value="MenG_MenH_UbiE"/>
    <property type="match status" value="1"/>
</dbReference>
<dbReference type="NCBIfam" id="NF001240">
    <property type="entry name" value="PRK00216.1-1"/>
    <property type="match status" value="1"/>
</dbReference>
<dbReference type="NCBIfam" id="NF001242">
    <property type="entry name" value="PRK00216.1-3"/>
    <property type="match status" value="1"/>
</dbReference>
<dbReference type="NCBIfam" id="NF001244">
    <property type="entry name" value="PRK00216.1-5"/>
    <property type="match status" value="1"/>
</dbReference>
<dbReference type="PANTHER" id="PTHR43591:SF24">
    <property type="entry name" value="2-METHOXY-6-POLYPRENYL-1,4-BENZOQUINOL METHYLASE, MITOCHONDRIAL"/>
    <property type="match status" value="1"/>
</dbReference>
<dbReference type="PANTHER" id="PTHR43591">
    <property type="entry name" value="METHYLTRANSFERASE"/>
    <property type="match status" value="1"/>
</dbReference>
<dbReference type="Pfam" id="PF01209">
    <property type="entry name" value="Ubie_methyltran"/>
    <property type="match status" value="1"/>
</dbReference>
<dbReference type="SUPFAM" id="SSF53335">
    <property type="entry name" value="S-adenosyl-L-methionine-dependent methyltransferases"/>
    <property type="match status" value="1"/>
</dbReference>
<dbReference type="PROSITE" id="PS51608">
    <property type="entry name" value="SAM_MT_UBIE"/>
    <property type="match status" value="1"/>
</dbReference>
<dbReference type="PROSITE" id="PS01183">
    <property type="entry name" value="UBIE_1"/>
    <property type="match status" value="1"/>
</dbReference>
<dbReference type="PROSITE" id="PS01184">
    <property type="entry name" value="UBIE_2"/>
    <property type="match status" value="1"/>
</dbReference>
<sequence>MVDQEKETTHFGFRTVAKEQKEGMVAEVFHSVAAKYDLMNDLMSFGVHRIWKRFTVDCSGVRRGQRVLDLAGGTGDLTAKFSRLVGEQGEVILADINESMLRMGREKLRDKGIVGNVSYVQANAEALPFPDNYFDCITISFGLRNVTEKEKALRSMFRVLKPGGRLLVLEFSKPLLEPLSKAYDAYSFHILPKIGELVAQDAESYRYLAESIRMHPDQETLKGMMADAGFENVTYSNLTGGIVALHRGFKF</sequence>
<protein>
    <recommendedName>
        <fullName evidence="1">Ubiquinone/menaquinone biosynthesis C-methyltransferase UbiE</fullName>
        <ecNumber evidence="1">2.1.1.163</ecNumber>
        <ecNumber evidence="1">2.1.1.201</ecNumber>
    </recommendedName>
    <alternativeName>
        <fullName evidence="1">2-methoxy-6-polyprenyl-1,4-benzoquinol methylase</fullName>
    </alternativeName>
    <alternativeName>
        <fullName evidence="1">Demethylmenaquinone methyltransferase</fullName>
    </alternativeName>
</protein>
<name>UBIE_YERPE</name>
<feature type="chain" id="PRO_0000193357" description="Ubiquinone/menaquinone biosynthesis C-methyltransferase UbiE">
    <location>
        <begin position="1"/>
        <end position="251"/>
    </location>
</feature>
<feature type="binding site" evidence="1">
    <location>
        <position position="74"/>
    </location>
    <ligand>
        <name>S-adenosyl-L-methionine</name>
        <dbReference type="ChEBI" id="CHEBI:59789"/>
    </ligand>
</feature>
<feature type="binding site" evidence="1">
    <location>
        <position position="95"/>
    </location>
    <ligand>
        <name>S-adenosyl-L-methionine</name>
        <dbReference type="ChEBI" id="CHEBI:59789"/>
    </ligand>
</feature>
<feature type="binding site" evidence="1">
    <location>
        <begin position="123"/>
        <end position="124"/>
    </location>
    <ligand>
        <name>S-adenosyl-L-methionine</name>
        <dbReference type="ChEBI" id="CHEBI:59789"/>
    </ligand>
</feature>
<feature type="binding site" evidence="1">
    <location>
        <position position="140"/>
    </location>
    <ligand>
        <name>S-adenosyl-L-methionine</name>
        <dbReference type="ChEBI" id="CHEBI:59789"/>
    </ligand>
</feature>
<feature type="sequence conflict" description="In Ref. 1; CAL22367." evidence="2" ref="1">
    <original>Y</original>
    <variation>F</variation>
    <location>
        <position position="133"/>
    </location>
</feature>
<gene>
    <name evidence="1" type="primary">ubiE</name>
    <name type="ordered locus">YPO3781</name>
    <name type="ordered locus">y0449</name>
    <name type="ordered locus">YP_3268</name>
</gene>
<evidence type="ECO:0000255" key="1">
    <source>
        <dbReference type="HAMAP-Rule" id="MF_01813"/>
    </source>
</evidence>
<evidence type="ECO:0000305" key="2"/>
<organism>
    <name type="scientific">Yersinia pestis</name>
    <dbReference type="NCBI Taxonomy" id="632"/>
    <lineage>
        <taxon>Bacteria</taxon>
        <taxon>Pseudomonadati</taxon>
        <taxon>Pseudomonadota</taxon>
        <taxon>Gammaproteobacteria</taxon>
        <taxon>Enterobacterales</taxon>
        <taxon>Yersiniaceae</taxon>
        <taxon>Yersinia</taxon>
    </lineage>
</organism>
<reference key="1">
    <citation type="journal article" date="2001" name="Nature">
        <title>Genome sequence of Yersinia pestis, the causative agent of plague.</title>
        <authorList>
            <person name="Parkhill J."/>
            <person name="Wren B.W."/>
            <person name="Thomson N.R."/>
            <person name="Titball R.W."/>
            <person name="Holden M.T.G."/>
            <person name="Prentice M.B."/>
            <person name="Sebaihia M."/>
            <person name="James K.D."/>
            <person name="Churcher C.M."/>
            <person name="Mungall K.L."/>
            <person name="Baker S."/>
            <person name="Basham D."/>
            <person name="Bentley S.D."/>
            <person name="Brooks K."/>
            <person name="Cerdeno-Tarraga A.-M."/>
            <person name="Chillingworth T."/>
            <person name="Cronin A."/>
            <person name="Davies R.M."/>
            <person name="Davis P."/>
            <person name="Dougan G."/>
            <person name="Feltwell T."/>
            <person name="Hamlin N."/>
            <person name="Holroyd S."/>
            <person name="Jagels K."/>
            <person name="Karlyshev A.V."/>
            <person name="Leather S."/>
            <person name="Moule S."/>
            <person name="Oyston P.C.F."/>
            <person name="Quail M.A."/>
            <person name="Rutherford K.M."/>
            <person name="Simmonds M."/>
            <person name="Skelton J."/>
            <person name="Stevens K."/>
            <person name="Whitehead S."/>
            <person name="Barrell B.G."/>
        </authorList>
    </citation>
    <scope>NUCLEOTIDE SEQUENCE [LARGE SCALE GENOMIC DNA]</scope>
    <source>
        <strain>CO-92 / Biovar Orientalis</strain>
    </source>
</reference>
<reference key="2">
    <citation type="journal article" date="2002" name="J. Bacteriol.">
        <title>Genome sequence of Yersinia pestis KIM.</title>
        <authorList>
            <person name="Deng W."/>
            <person name="Burland V."/>
            <person name="Plunkett G. III"/>
            <person name="Boutin A."/>
            <person name="Mayhew G.F."/>
            <person name="Liss P."/>
            <person name="Perna N.T."/>
            <person name="Rose D.J."/>
            <person name="Mau B."/>
            <person name="Zhou S."/>
            <person name="Schwartz D.C."/>
            <person name="Fetherston J.D."/>
            <person name="Lindler L.E."/>
            <person name="Brubaker R.R."/>
            <person name="Plano G.V."/>
            <person name="Straley S.C."/>
            <person name="McDonough K.A."/>
            <person name="Nilles M.L."/>
            <person name="Matson J.S."/>
            <person name="Blattner F.R."/>
            <person name="Perry R.D."/>
        </authorList>
    </citation>
    <scope>NUCLEOTIDE SEQUENCE [LARGE SCALE GENOMIC DNA]</scope>
    <source>
        <strain>KIM10+ / Biovar Mediaevalis</strain>
    </source>
</reference>
<reference key="3">
    <citation type="journal article" date="2004" name="DNA Res.">
        <title>Complete genome sequence of Yersinia pestis strain 91001, an isolate avirulent to humans.</title>
        <authorList>
            <person name="Song Y."/>
            <person name="Tong Z."/>
            <person name="Wang J."/>
            <person name="Wang L."/>
            <person name="Guo Z."/>
            <person name="Han Y."/>
            <person name="Zhang J."/>
            <person name="Pei D."/>
            <person name="Zhou D."/>
            <person name="Qin H."/>
            <person name="Pang X."/>
            <person name="Han Y."/>
            <person name="Zhai J."/>
            <person name="Li M."/>
            <person name="Cui B."/>
            <person name="Qi Z."/>
            <person name="Jin L."/>
            <person name="Dai R."/>
            <person name="Chen F."/>
            <person name="Li S."/>
            <person name="Ye C."/>
            <person name="Du Z."/>
            <person name="Lin W."/>
            <person name="Wang J."/>
            <person name="Yu J."/>
            <person name="Yang H."/>
            <person name="Wang J."/>
            <person name="Huang P."/>
            <person name="Yang R."/>
        </authorList>
    </citation>
    <scope>NUCLEOTIDE SEQUENCE [LARGE SCALE GENOMIC DNA]</scope>
    <source>
        <strain>91001 / Biovar Mediaevalis</strain>
    </source>
</reference>
<proteinExistence type="inferred from homology"/>
<comment type="function">
    <text evidence="1">Methyltransferase required for the conversion of demethylmenaquinol (DMKH2) to menaquinol (MKH2) and the conversion of 2-polyprenyl-6-methoxy-1,4-benzoquinol (DDMQH2) to 2-polyprenyl-3-methyl-6-methoxy-1,4-benzoquinol (DMQH2).</text>
</comment>
<comment type="catalytic activity">
    <reaction evidence="1">
        <text>a 2-demethylmenaquinol + S-adenosyl-L-methionine = a menaquinol + S-adenosyl-L-homocysteine + H(+)</text>
        <dbReference type="Rhea" id="RHEA:42640"/>
        <dbReference type="Rhea" id="RHEA-COMP:9539"/>
        <dbReference type="Rhea" id="RHEA-COMP:9563"/>
        <dbReference type="ChEBI" id="CHEBI:15378"/>
        <dbReference type="ChEBI" id="CHEBI:18151"/>
        <dbReference type="ChEBI" id="CHEBI:55437"/>
        <dbReference type="ChEBI" id="CHEBI:57856"/>
        <dbReference type="ChEBI" id="CHEBI:59789"/>
        <dbReference type="EC" id="2.1.1.163"/>
    </reaction>
</comment>
<comment type="catalytic activity">
    <reaction evidence="1">
        <text>a 2-methoxy-6-(all-trans-polyprenyl)benzene-1,4-diol + S-adenosyl-L-methionine = a 5-methoxy-2-methyl-3-(all-trans-polyprenyl)benzene-1,4-diol + S-adenosyl-L-homocysteine + H(+)</text>
        <dbReference type="Rhea" id="RHEA:28286"/>
        <dbReference type="Rhea" id="RHEA-COMP:10858"/>
        <dbReference type="Rhea" id="RHEA-COMP:10859"/>
        <dbReference type="ChEBI" id="CHEBI:15378"/>
        <dbReference type="ChEBI" id="CHEBI:57856"/>
        <dbReference type="ChEBI" id="CHEBI:59789"/>
        <dbReference type="ChEBI" id="CHEBI:84166"/>
        <dbReference type="ChEBI" id="CHEBI:84167"/>
        <dbReference type="EC" id="2.1.1.201"/>
    </reaction>
</comment>
<comment type="pathway">
    <text evidence="1">Quinol/quinone metabolism; menaquinone biosynthesis; menaquinol from 1,4-dihydroxy-2-naphthoate: step 2/2.</text>
</comment>
<comment type="pathway">
    <text evidence="1">Cofactor biosynthesis; ubiquinone biosynthesis.</text>
</comment>
<comment type="similarity">
    <text evidence="1">Belongs to the class I-like SAM-binding methyltransferase superfamily. MenG/UbiE family.</text>
</comment>